<gene>
    <name evidence="13" type="primary">su(sable)</name>
    <name evidence="11" type="synonym">su(s)</name>
    <name evidence="13" type="ORF">CG6222</name>
</gene>
<name>SUS_DROME</name>
<evidence type="ECO:0000255" key="1"/>
<evidence type="ECO:0000255" key="2">
    <source>
        <dbReference type="PROSITE-ProRule" id="PRU00723"/>
    </source>
</evidence>
<evidence type="ECO:0000256" key="3">
    <source>
        <dbReference type="SAM" id="MobiDB-lite"/>
    </source>
</evidence>
<evidence type="ECO:0000269" key="4">
    <source>
    </source>
</evidence>
<evidence type="ECO:0000269" key="5">
    <source>
    </source>
</evidence>
<evidence type="ECO:0000269" key="6">
    <source>
    </source>
</evidence>
<evidence type="ECO:0000269" key="7">
    <source>
    </source>
</evidence>
<evidence type="ECO:0000269" key="8">
    <source>
    </source>
</evidence>
<evidence type="ECO:0000269" key="9">
    <source>
    </source>
</evidence>
<evidence type="ECO:0000269" key="10">
    <source>
    </source>
</evidence>
<evidence type="ECO:0000303" key="11">
    <source>
    </source>
</evidence>
<evidence type="ECO:0000305" key="12"/>
<evidence type="ECO:0000312" key="13">
    <source>
        <dbReference type="FlyBase" id="FBgn0003575"/>
    </source>
</evidence>
<keyword id="KW-0158">Chromosome</keyword>
<keyword id="KW-0175">Coiled coil</keyword>
<keyword id="KW-0479">Metal-binding</keyword>
<keyword id="KW-0539">Nucleus</keyword>
<keyword id="KW-0597">Phosphoprotein</keyword>
<keyword id="KW-1185">Reference proteome</keyword>
<keyword id="KW-0677">Repeat</keyword>
<keyword id="KW-0694">RNA-binding</keyword>
<keyword id="KW-0804">Transcription</keyword>
<keyword id="KW-0805">Transcription regulation</keyword>
<keyword id="KW-0806">Transcription termination</keyword>
<keyword id="KW-0862">Zinc</keyword>
<keyword id="KW-0863">Zinc-finger</keyword>
<feature type="chain" id="PRO_0000072321" description="Protein suppressor of sable">
    <location>
        <begin position="1"/>
        <end position="1325"/>
    </location>
</feature>
<feature type="zinc finger region" description="C3H1-type 1" evidence="2">
    <location>
        <begin position="330"/>
        <end position="357"/>
    </location>
</feature>
<feature type="zinc finger region" description="C3H1-type 2" evidence="2">
    <location>
        <begin position="358"/>
        <end position="381"/>
    </location>
</feature>
<feature type="region of interest" description="Disordered" evidence="3">
    <location>
        <begin position="1"/>
        <end position="36"/>
    </location>
</feature>
<feature type="region of interest" description="Disordered" evidence="3">
    <location>
        <begin position="74"/>
        <end position="326"/>
    </location>
</feature>
<feature type="region of interest" description="Highly charged">
    <location>
        <begin position="138"/>
        <end position="327"/>
    </location>
</feature>
<feature type="region of interest" description="Disordered" evidence="3">
    <location>
        <begin position="499"/>
        <end position="535"/>
    </location>
</feature>
<feature type="region of interest" description="Disordered" evidence="3">
    <location>
        <begin position="588"/>
        <end position="622"/>
    </location>
</feature>
<feature type="region of interest" description="Disordered" evidence="3">
    <location>
        <begin position="639"/>
        <end position="695"/>
    </location>
</feature>
<feature type="region of interest" description="Disordered" evidence="3">
    <location>
        <begin position="710"/>
        <end position="745"/>
    </location>
</feature>
<feature type="region of interest" description="Disordered" evidence="3">
    <location>
        <begin position="780"/>
        <end position="835"/>
    </location>
</feature>
<feature type="region of interest" description="Disordered" evidence="3">
    <location>
        <begin position="979"/>
        <end position="1058"/>
    </location>
</feature>
<feature type="region of interest" description="Disordered" evidence="3">
    <location>
        <begin position="1143"/>
        <end position="1170"/>
    </location>
</feature>
<feature type="region of interest" description="Disordered" evidence="3">
    <location>
        <begin position="1295"/>
        <end position="1325"/>
    </location>
</feature>
<feature type="coiled-coil region" evidence="1">
    <location>
        <begin position="149"/>
        <end position="179"/>
    </location>
</feature>
<feature type="coiled-coil region" evidence="1">
    <location>
        <begin position="276"/>
        <end position="296"/>
    </location>
</feature>
<feature type="coiled-coil region" evidence="1">
    <location>
        <begin position="444"/>
        <end position="478"/>
    </location>
</feature>
<feature type="compositionally biased region" description="Acidic residues" evidence="3">
    <location>
        <begin position="9"/>
        <end position="30"/>
    </location>
</feature>
<feature type="compositionally biased region" description="Polar residues" evidence="3">
    <location>
        <begin position="119"/>
        <end position="131"/>
    </location>
</feature>
<feature type="compositionally biased region" description="Basic residues" evidence="3">
    <location>
        <begin position="149"/>
        <end position="158"/>
    </location>
</feature>
<feature type="compositionally biased region" description="Basic and acidic residues" evidence="3">
    <location>
        <begin position="159"/>
        <end position="178"/>
    </location>
</feature>
<feature type="compositionally biased region" description="Gly residues" evidence="3">
    <location>
        <begin position="236"/>
        <end position="246"/>
    </location>
</feature>
<feature type="compositionally biased region" description="Basic and acidic residues" evidence="3">
    <location>
        <begin position="499"/>
        <end position="509"/>
    </location>
</feature>
<feature type="compositionally biased region" description="Polar residues" evidence="3">
    <location>
        <begin position="594"/>
        <end position="606"/>
    </location>
</feature>
<feature type="compositionally biased region" description="Acidic residues" evidence="3">
    <location>
        <begin position="644"/>
        <end position="668"/>
    </location>
</feature>
<feature type="compositionally biased region" description="Polar residues" evidence="3">
    <location>
        <begin position="710"/>
        <end position="726"/>
    </location>
</feature>
<feature type="compositionally biased region" description="Low complexity" evidence="3">
    <location>
        <begin position="790"/>
        <end position="800"/>
    </location>
</feature>
<feature type="compositionally biased region" description="Pro residues" evidence="3">
    <location>
        <begin position="1003"/>
        <end position="1015"/>
    </location>
</feature>
<feature type="compositionally biased region" description="Basic and acidic residues" evidence="3">
    <location>
        <begin position="1021"/>
        <end position="1033"/>
    </location>
</feature>
<feature type="compositionally biased region" description="Low complexity" evidence="3">
    <location>
        <begin position="1042"/>
        <end position="1056"/>
    </location>
</feature>
<feature type="compositionally biased region" description="Gly residues" evidence="3">
    <location>
        <begin position="1149"/>
        <end position="1170"/>
    </location>
</feature>
<feature type="compositionally biased region" description="Gly residues" evidence="3">
    <location>
        <begin position="1295"/>
        <end position="1309"/>
    </location>
</feature>
<feature type="modified residue" description="Phosphoserine" evidence="7">
    <location>
        <position position="524"/>
    </location>
</feature>
<feature type="modified residue" description="Phosphothreonine" evidence="7">
    <location>
        <position position="604"/>
    </location>
</feature>
<feature type="modified residue" description="Phosphoserine" evidence="7">
    <location>
        <position position="663"/>
    </location>
</feature>
<feature type="modified residue" description="Phosphothreonine" evidence="7">
    <location>
        <position position="664"/>
    </location>
</feature>
<feature type="sequence conflict" description="In Ref. 5; AAL49185." evidence="12" ref="5">
    <original>E</original>
    <variation>G</variation>
    <location>
        <position position="687"/>
    </location>
</feature>
<feature type="sequence conflict" description="In Ref. 1; AAA28920." evidence="12" ref="1">
    <location>
        <begin position="720"/>
        <end position="722"/>
    </location>
</feature>
<reference key="1">
    <citation type="journal article" date="1991" name="Mol. Cell. Biol.">
        <title>The Drosophila suppressor of sable gene encodes a polypeptide with regions similar to those of RNA-binding proteins.</title>
        <authorList>
            <person name="Voelker R.A."/>
            <person name="Gibson W."/>
            <person name="Graves J.P."/>
            <person name="Sterling J.F."/>
            <person name="Eisenberg M.T."/>
        </authorList>
    </citation>
    <scope>NUCLEOTIDE SEQUENCE [GENOMIC DNA]</scope>
    <scope>FUNCTION</scope>
    <scope>SUBCELLULAR LOCATION</scope>
    <scope>DEVELOPMENTAL STAGE</scope>
    <source>
        <strain>Oregon-R</strain>
    </source>
</reference>
<reference key="2">
    <citation type="journal article" date="2000" name="Science">
        <title>The genome sequence of Drosophila melanogaster.</title>
        <authorList>
            <person name="Adams M.D."/>
            <person name="Celniker S.E."/>
            <person name="Holt R.A."/>
            <person name="Evans C.A."/>
            <person name="Gocayne J.D."/>
            <person name="Amanatides P.G."/>
            <person name="Scherer S.E."/>
            <person name="Li P.W."/>
            <person name="Hoskins R.A."/>
            <person name="Galle R.F."/>
            <person name="George R.A."/>
            <person name="Lewis S.E."/>
            <person name="Richards S."/>
            <person name="Ashburner M."/>
            <person name="Henderson S.N."/>
            <person name="Sutton G.G."/>
            <person name="Wortman J.R."/>
            <person name="Yandell M.D."/>
            <person name="Zhang Q."/>
            <person name="Chen L.X."/>
            <person name="Brandon R.C."/>
            <person name="Rogers Y.-H.C."/>
            <person name="Blazej R.G."/>
            <person name="Champe M."/>
            <person name="Pfeiffer B.D."/>
            <person name="Wan K.H."/>
            <person name="Doyle C."/>
            <person name="Baxter E.G."/>
            <person name="Helt G."/>
            <person name="Nelson C.R."/>
            <person name="Miklos G.L.G."/>
            <person name="Abril J.F."/>
            <person name="Agbayani A."/>
            <person name="An H.-J."/>
            <person name="Andrews-Pfannkoch C."/>
            <person name="Baldwin D."/>
            <person name="Ballew R.M."/>
            <person name="Basu A."/>
            <person name="Baxendale J."/>
            <person name="Bayraktaroglu L."/>
            <person name="Beasley E.M."/>
            <person name="Beeson K.Y."/>
            <person name="Benos P.V."/>
            <person name="Berman B.P."/>
            <person name="Bhandari D."/>
            <person name="Bolshakov S."/>
            <person name="Borkova D."/>
            <person name="Botchan M.R."/>
            <person name="Bouck J."/>
            <person name="Brokstein P."/>
            <person name="Brottier P."/>
            <person name="Burtis K.C."/>
            <person name="Busam D.A."/>
            <person name="Butler H."/>
            <person name="Cadieu E."/>
            <person name="Center A."/>
            <person name="Chandra I."/>
            <person name="Cherry J.M."/>
            <person name="Cawley S."/>
            <person name="Dahlke C."/>
            <person name="Davenport L.B."/>
            <person name="Davies P."/>
            <person name="de Pablos B."/>
            <person name="Delcher A."/>
            <person name="Deng Z."/>
            <person name="Mays A.D."/>
            <person name="Dew I."/>
            <person name="Dietz S.M."/>
            <person name="Dodson K."/>
            <person name="Doup L.E."/>
            <person name="Downes M."/>
            <person name="Dugan-Rocha S."/>
            <person name="Dunkov B.C."/>
            <person name="Dunn P."/>
            <person name="Durbin K.J."/>
            <person name="Evangelista C.C."/>
            <person name="Ferraz C."/>
            <person name="Ferriera S."/>
            <person name="Fleischmann W."/>
            <person name="Fosler C."/>
            <person name="Gabrielian A.E."/>
            <person name="Garg N.S."/>
            <person name="Gelbart W.M."/>
            <person name="Glasser K."/>
            <person name="Glodek A."/>
            <person name="Gong F."/>
            <person name="Gorrell J.H."/>
            <person name="Gu Z."/>
            <person name="Guan P."/>
            <person name="Harris M."/>
            <person name="Harris N.L."/>
            <person name="Harvey D.A."/>
            <person name="Heiman T.J."/>
            <person name="Hernandez J.R."/>
            <person name="Houck J."/>
            <person name="Hostin D."/>
            <person name="Houston K.A."/>
            <person name="Howland T.J."/>
            <person name="Wei M.-H."/>
            <person name="Ibegwam C."/>
            <person name="Jalali M."/>
            <person name="Kalush F."/>
            <person name="Karpen G.H."/>
            <person name="Ke Z."/>
            <person name="Kennison J.A."/>
            <person name="Ketchum K.A."/>
            <person name="Kimmel B.E."/>
            <person name="Kodira C.D."/>
            <person name="Kraft C.L."/>
            <person name="Kravitz S."/>
            <person name="Kulp D."/>
            <person name="Lai Z."/>
            <person name="Lasko P."/>
            <person name="Lei Y."/>
            <person name="Levitsky A.A."/>
            <person name="Li J.H."/>
            <person name="Li Z."/>
            <person name="Liang Y."/>
            <person name="Lin X."/>
            <person name="Liu X."/>
            <person name="Mattei B."/>
            <person name="McIntosh T.C."/>
            <person name="McLeod M.P."/>
            <person name="McPherson D."/>
            <person name="Merkulov G."/>
            <person name="Milshina N.V."/>
            <person name="Mobarry C."/>
            <person name="Morris J."/>
            <person name="Moshrefi A."/>
            <person name="Mount S.M."/>
            <person name="Moy M."/>
            <person name="Murphy B."/>
            <person name="Murphy L."/>
            <person name="Muzny D.M."/>
            <person name="Nelson D.L."/>
            <person name="Nelson D.R."/>
            <person name="Nelson K.A."/>
            <person name="Nixon K."/>
            <person name="Nusskern D.R."/>
            <person name="Pacleb J.M."/>
            <person name="Palazzolo M."/>
            <person name="Pittman G.S."/>
            <person name="Pan S."/>
            <person name="Pollard J."/>
            <person name="Puri V."/>
            <person name="Reese M.G."/>
            <person name="Reinert K."/>
            <person name="Remington K."/>
            <person name="Saunders R.D.C."/>
            <person name="Scheeler F."/>
            <person name="Shen H."/>
            <person name="Shue B.C."/>
            <person name="Siden-Kiamos I."/>
            <person name="Simpson M."/>
            <person name="Skupski M.P."/>
            <person name="Smith T.J."/>
            <person name="Spier E."/>
            <person name="Spradling A.C."/>
            <person name="Stapleton M."/>
            <person name="Strong R."/>
            <person name="Sun E."/>
            <person name="Svirskas R."/>
            <person name="Tector C."/>
            <person name="Turner R."/>
            <person name="Venter E."/>
            <person name="Wang A.H."/>
            <person name="Wang X."/>
            <person name="Wang Z.-Y."/>
            <person name="Wassarman D.A."/>
            <person name="Weinstock G.M."/>
            <person name="Weissenbach J."/>
            <person name="Williams S.M."/>
            <person name="Woodage T."/>
            <person name="Worley K.C."/>
            <person name="Wu D."/>
            <person name="Yang S."/>
            <person name="Yao Q.A."/>
            <person name="Ye J."/>
            <person name="Yeh R.-F."/>
            <person name="Zaveri J.S."/>
            <person name="Zhan M."/>
            <person name="Zhang G."/>
            <person name="Zhao Q."/>
            <person name="Zheng L."/>
            <person name="Zheng X.H."/>
            <person name="Zhong F.N."/>
            <person name="Zhong W."/>
            <person name="Zhou X."/>
            <person name="Zhu S.C."/>
            <person name="Zhu X."/>
            <person name="Smith H.O."/>
            <person name="Gibbs R.A."/>
            <person name="Myers E.W."/>
            <person name="Rubin G.M."/>
            <person name="Venter J.C."/>
        </authorList>
    </citation>
    <scope>NUCLEOTIDE SEQUENCE [LARGE SCALE GENOMIC DNA]</scope>
    <source>
        <strain>Berkeley</strain>
    </source>
</reference>
<reference key="3">
    <citation type="journal article" date="2002" name="Genome Biol.">
        <title>Annotation of the Drosophila melanogaster euchromatic genome: a systematic review.</title>
        <authorList>
            <person name="Misra S."/>
            <person name="Crosby M.A."/>
            <person name="Mungall C.J."/>
            <person name="Matthews B.B."/>
            <person name="Campbell K.S."/>
            <person name="Hradecky P."/>
            <person name="Huang Y."/>
            <person name="Kaminker J.S."/>
            <person name="Millburn G.H."/>
            <person name="Prochnik S.E."/>
            <person name="Smith C.D."/>
            <person name="Tupy J.L."/>
            <person name="Whitfield E.J."/>
            <person name="Bayraktaroglu L."/>
            <person name="Berman B.P."/>
            <person name="Bettencourt B.R."/>
            <person name="Celniker S.E."/>
            <person name="de Grey A.D.N.J."/>
            <person name="Drysdale R.A."/>
            <person name="Harris N.L."/>
            <person name="Richter J."/>
            <person name="Russo S."/>
            <person name="Schroeder A.J."/>
            <person name="Shu S.Q."/>
            <person name="Stapleton M."/>
            <person name="Yamada C."/>
            <person name="Ashburner M."/>
            <person name="Gelbart W.M."/>
            <person name="Rubin G.M."/>
            <person name="Lewis S.E."/>
        </authorList>
    </citation>
    <scope>GENOME REANNOTATION</scope>
    <source>
        <strain>Berkeley</strain>
    </source>
</reference>
<reference key="4">
    <citation type="journal article" date="2000" name="Science">
        <title>From sequence to chromosome: the tip of the X chromosome of D. melanogaster.</title>
        <authorList>
            <person name="Benos P.V."/>
            <person name="Gatt M.K."/>
            <person name="Ashburner M."/>
            <person name="Murphy L."/>
            <person name="Harris D."/>
            <person name="Barrell B.G."/>
            <person name="Ferraz C."/>
            <person name="Vidal S."/>
            <person name="Brun C."/>
            <person name="Demailles J."/>
            <person name="Cadieu E."/>
            <person name="Dreano S."/>
            <person name="Gloux S."/>
            <person name="Lelaure V."/>
            <person name="Mottier S."/>
            <person name="Galibert F."/>
            <person name="Borkova D."/>
            <person name="Minana B."/>
            <person name="Kafatos F.C."/>
            <person name="Louis C."/>
            <person name="Siden-Kiamos I."/>
            <person name="Bolshakov S."/>
            <person name="Papagiannakis G."/>
            <person name="Spanos L."/>
            <person name="Cox S."/>
            <person name="Madueno E."/>
            <person name="de Pablos B."/>
            <person name="Modolell J."/>
            <person name="Peter A."/>
            <person name="Schoettler P."/>
            <person name="Werner M."/>
            <person name="Mourkioti F."/>
            <person name="Beinert N."/>
            <person name="Dowe G."/>
            <person name="Schaefer U."/>
            <person name="Jaeckle H."/>
            <person name="Bucheton A."/>
            <person name="Callister D.M."/>
            <person name="Campbell L.A."/>
            <person name="Darlamitsou A."/>
            <person name="Henderson N.S."/>
            <person name="McMillan P.J."/>
            <person name="Salles C."/>
            <person name="Tait E.A."/>
            <person name="Valenti P."/>
            <person name="Saunders R.D.C."/>
            <person name="Glover D.M."/>
        </authorList>
    </citation>
    <scope>NUCLEOTIDE SEQUENCE [LARGE SCALE GENOMIC DNA]</scope>
    <source>
        <strain>Oregon-R</strain>
    </source>
</reference>
<reference key="5">
    <citation type="journal article" date="2002" name="Genome Biol.">
        <title>A Drosophila full-length cDNA resource.</title>
        <authorList>
            <person name="Stapleton M."/>
            <person name="Carlson J.W."/>
            <person name="Brokstein P."/>
            <person name="Yu C."/>
            <person name="Champe M."/>
            <person name="George R.A."/>
            <person name="Guarin H."/>
            <person name="Kronmiller B."/>
            <person name="Pacleb J.M."/>
            <person name="Park S."/>
            <person name="Wan K.H."/>
            <person name="Rubin G.M."/>
            <person name="Celniker S.E."/>
        </authorList>
    </citation>
    <scope>NUCLEOTIDE SEQUENCE [LARGE SCALE MRNA]</scope>
    <source>
        <strain>Berkeley</strain>
        <tissue>Embryo</tissue>
    </source>
</reference>
<reference key="6">
    <citation type="journal article" date="1990" name="Genetics">
        <title>Mobile element insertions causing mutations in the Drosophila suppressor of sable locus occur in DNase I hypersensitive subregions of 5'-transcribed nontranslated sequences.</title>
        <authorList>
            <person name="Voelker R.A."/>
            <person name="Graves J.P."/>
            <person name="Gibson W."/>
            <person name="Eisenberg M.T."/>
        </authorList>
    </citation>
    <scope>NUCLEOTIDE SEQUENCE [GENOMIC DNA] OF 1-9</scope>
</reference>
<reference key="7">
    <citation type="journal article" date="1997" name="Mol. Cell. Biol.">
        <title>The Drosophila suppressor of sable protein binds to RNA and associates with a subset of polytene chromosome bands.</title>
        <authorList>
            <person name="Murray M.V."/>
            <person name="Turnage M.A."/>
            <person name="Williamson K.J."/>
            <person name="Steinhauer W.R."/>
            <person name="Searles L.L."/>
        </authorList>
    </citation>
    <scope>FUNCTION</scope>
    <scope>SUBCELLULAR LOCATION</scope>
</reference>
<reference key="8">
    <citation type="journal article" date="2000" name="Mol. Cell. Biol.">
        <title>Arginine-rich regions mediate the RNA binding and regulatory activities of the protein encoded by the Drosophila melanogaster suppressor of sable gene.</title>
        <authorList>
            <person name="Turnage M.A."/>
            <person name="Brewer-Jensen P."/>
            <person name="Bai W.L."/>
            <person name="Searles L.L."/>
        </authorList>
    </citation>
    <scope>FUNCTION</scope>
    <scope>SUBCELLULAR LOCATION</scope>
</reference>
<reference key="9">
    <citation type="journal article" date="2004" name="Mol. Cell. Biol.">
        <title>Suppressor of sable, a putative RNA-processing protein, functions at the level of transcription.</title>
        <authorList>
            <person name="Kuan Y.S."/>
            <person name="Brewer-Jensen P."/>
            <person name="Searles L.L."/>
        </authorList>
    </citation>
    <scope>FUNCTION</scope>
    <scope>SUBCELLULAR LOCATION</scope>
</reference>
<reference key="10">
    <citation type="journal article" date="2008" name="J. Proteome Res.">
        <title>Phosphoproteome analysis of Drosophila melanogaster embryos.</title>
        <authorList>
            <person name="Zhai B."/>
            <person name="Villen J."/>
            <person name="Beausoleil S.A."/>
            <person name="Mintseris J."/>
            <person name="Gygi S.P."/>
        </authorList>
    </citation>
    <scope>PHOSPHORYLATION [LARGE SCALE ANALYSIS] AT SER-524; THR-604; SER-663 AND THR-664</scope>
    <scope>IDENTIFICATION BY MASS SPECTROMETRY</scope>
    <source>
        <tissue>Embryo</tissue>
    </source>
</reference>
<reference key="11">
    <citation type="journal article" date="2009" name="Mol. Cell. Biol.">
        <title>Drosophila suppressor of sable protein [Su(s)] promotes degradation of aberrant and transposon-derived RNAs.</title>
        <authorList>
            <person name="Kuan Y.S."/>
            <person name="Brewer-Jensen P."/>
            <person name="Bai W.L."/>
            <person name="Hunter C."/>
            <person name="Wilson C.B."/>
            <person name="Bass S."/>
            <person name="Abernethy J."/>
            <person name="Wing J.S."/>
            <person name="Searles L.L."/>
        </authorList>
    </citation>
    <scope>FUNCTION</scope>
    <scope>SUBCELLULAR LOCATION</scope>
</reference>
<reference key="12">
    <citation type="journal article" date="2016" name="RNA">
        <title>Suppressor of sable [Su(s)] and Wdr82 down-regulate RNA from heat-shock-inducible repetitive elements by a mechanism that involves transcription termination.</title>
        <authorList>
            <person name="Brewer-Jensen P."/>
            <person name="Wilson C.B."/>
            <person name="Abernethy J."/>
            <person name="Mollison L."/>
            <person name="Card S."/>
            <person name="Searles L.L."/>
        </authorList>
    </citation>
    <scope>FUNCTION</scope>
    <scope>INTERACTION WITH WDR82</scope>
</reference>
<accession>P22293</accession>
<accession>O77427</accession>
<accession>Q8SYG7</accession>
<proteinExistence type="evidence at protein level"/>
<comment type="function">
    <text evidence="4 5 6 8 9 10">RNA-binding protein that suppresses transcription of some RNAs (PubMed:11027289, PubMed:15082769, PubMed:1703632, PubMed:19687295, PubMed:26577379, PubMed:9121479). Together with Wdr82, part of a transcription termination checkpoint that promotes transcription termination of RNAs and their subsequent degradation by the nuclear exosome (PubMed:26577379). Promotes transcription termination of aberrant RNAs, transcripts from genes containing a transposon inserted at their very 5' end or RNAs from heat-shock-inducible repetitive element (PubMed:1703632, PubMed:19687295, PubMed:26577379). Binds RNA preferentially at a sequence that resembles a cryptic 5'-splice site (PubMed:9121479).</text>
</comment>
<comment type="subunit">
    <text evidence="9">Interacts with Wdr82.</text>
</comment>
<comment type="subcellular location">
    <subcellularLocation>
        <location evidence="4 6 10">Nucleus</location>
    </subcellularLocation>
    <subcellularLocation>
        <location evidence="5 8">Chromosome</location>
    </subcellularLocation>
    <text evidence="5 8">Localizes to polytene chromosomes.</text>
</comment>
<comment type="developmental stage">
    <text evidence="6">At all stages.</text>
</comment>
<comment type="similarity">
    <text evidence="12">Belongs to the suppressor of sable family.</text>
</comment>
<comment type="sequence caution" evidence="12">
    <conflict type="frameshift">
        <sequence resource="EMBL-CDS" id="AAL49185"/>
    </conflict>
</comment>
<protein>
    <recommendedName>
        <fullName evidence="11">Protein suppressor of sable</fullName>
    </recommendedName>
</protein>
<dbReference type="EMBL" id="M57889">
    <property type="protein sequence ID" value="AAA28920.1"/>
    <property type="molecule type" value="Genomic_DNA"/>
</dbReference>
<dbReference type="EMBL" id="AE014298">
    <property type="protein sequence ID" value="AAF45534.1"/>
    <property type="molecule type" value="Genomic_DNA"/>
</dbReference>
<dbReference type="EMBL" id="AL031581">
    <property type="protein sequence ID" value="CAA20886.1"/>
    <property type="molecule type" value="Genomic_DNA"/>
</dbReference>
<dbReference type="EMBL" id="AY071563">
    <property type="protein sequence ID" value="AAL49185.1"/>
    <property type="status" value="ALT_FRAME"/>
    <property type="molecule type" value="mRNA"/>
</dbReference>
<dbReference type="EMBL" id="X59364">
    <property type="protein sequence ID" value="CAA42010.1"/>
    <property type="molecule type" value="Genomic_DNA"/>
</dbReference>
<dbReference type="PIR" id="T13386">
    <property type="entry name" value="T13386"/>
</dbReference>
<dbReference type="RefSeq" id="NP_001284753.1">
    <property type="nucleotide sequence ID" value="NM_001297824.1"/>
</dbReference>
<dbReference type="RefSeq" id="NP_476754.1">
    <property type="nucleotide sequence ID" value="NM_057406.4"/>
</dbReference>
<dbReference type="SMR" id="P22293"/>
<dbReference type="BioGRID" id="57580">
    <property type="interactions" value="31"/>
</dbReference>
<dbReference type="DIP" id="DIP-19699N"/>
<dbReference type="FunCoup" id="P22293">
    <property type="interactions" value="468"/>
</dbReference>
<dbReference type="IntAct" id="P22293">
    <property type="interactions" value="25"/>
</dbReference>
<dbReference type="STRING" id="7227.FBpp0070115"/>
<dbReference type="GlyGen" id="P22293">
    <property type="glycosylation" value="1 site"/>
</dbReference>
<dbReference type="iPTMnet" id="P22293"/>
<dbReference type="PaxDb" id="7227-FBpp0070115"/>
<dbReference type="DNASU" id="31012"/>
<dbReference type="EnsemblMetazoa" id="FBtr0070120">
    <property type="protein sequence ID" value="FBpp0070115"/>
    <property type="gene ID" value="FBgn0003575"/>
</dbReference>
<dbReference type="EnsemblMetazoa" id="FBtr0340082">
    <property type="protein sequence ID" value="FBpp0309081"/>
    <property type="gene ID" value="FBgn0003575"/>
</dbReference>
<dbReference type="GeneID" id="31012"/>
<dbReference type="KEGG" id="dme:Dmel_CG6222"/>
<dbReference type="AGR" id="FB:FBgn0003575"/>
<dbReference type="CTD" id="31012"/>
<dbReference type="FlyBase" id="FBgn0003575">
    <property type="gene designation" value="su(sable)"/>
</dbReference>
<dbReference type="VEuPathDB" id="VectorBase:FBgn0003575"/>
<dbReference type="eggNOG" id="KOG1040">
    <property type="taxonomic scope" value="Eukaryota"/>
</dbReference>
<dbReference type="HOGENOM" id="CLU_247398_0_0_1"/>
<dbReference type="InParanoid" id="P22293"/>
<dbReference type="OMA" id="HTPLRWQ"/>
<dbReference type="OrthoDB" id="411372at2759"/>
<dbReference type="PhylomeDB" id="P22293"/>
<dbReference type="Reactome" id="R-DME-6807505">
    <property type="pathway name" value="RNA polymerase II transcribes snRNA genes"/>
</dbReference>
<dbReference type="BioGRID-ORCS" id="31012">
    <property type="hits" value="0 hits in 3 CRISPR screens"/>
</dbReference>
<dbReference type="GenomeRNAi" id="31012"/>
<dbReference type="PRO" id="PR:P22293"/>
<dbReference type="Proteomes" id="UP000000803">
    <property type="component" value="Chromosome X"/>
</dbReference>
<dbReference type="Bgee" id="FBgn0003575">
    <property type="expression patterns" value="Expressed in adult Malpighian tubule principal cell of initial segment in Malpighian tubule and 170 other cell types or tissues"/>
</dbReference>
<dbReference type="ExpressionAtlas" id="P22293">
    <property type="expression patterns" value="baseline and differential"/>
</dbReference>
<dbReference type="GO" id="GO:0005654">
    <property type="term" value="C:nucleoplasm"/>
    <property type="evidence" value="ECO:0000314"/>
    <property type="project" value="FlyBase"/>
</dbReference>
<dbReference type="GO" id="GO:0005634">
    <property type="term" value="C:nucleus"/>
    <property type="evidence" value="ECO:0000318"/>
    <property type="project" value="GO_Central"/>
</dbReference>
<dbReference type="GO" id="GO:0005700">
    <property type="term" value="C:polytene chromosome"/>
    <property type="evidence" value="ECO:0000314"/>
    <property type="project" value="FlyBase"/>
</dbReference>
<dbReference type="GO" id="GO:0003723">
    <property type="term" value="F:RNA binding"/>
    <property type="evidence" value="ECO:0000314"/>
    <property type="project" value="FlyBase"/>
</dbReference>
<dbReference type="GO" id="GO:0008270">
    <property type="term" value="F:zinc ion binding"/>
    <property type="evidence" value="ECO:0007669"/>
    <property type="project" value="UniProtKB-KW"/>
</dbReference>
<dbReference type="GO" id="GO:0006353">
    <property type="term" value="P:DNA-templated transcription termination"/>
    <property type="evidence" value="ECO:0007669"/>
    <property type="project" value="UniProtKB-KW"/>
</dbReference>
<dbReference type="GO" id="GO:0045892">
    <property type="term" value="P:negative regulation of DNA-templated transcription"/>
    <property type="evidence" value="ECO:0000314"/>
    <property type="project" value="FlyBase"/>
</dbReference>
<dbReference type="GO" id="GO:0032785">
    <property type="term" value="P:negative regulation of DNA-templated transcription, elongation"/>
    <property type="evidence" value="ECO:0000314"/>
    <property type="project" value="UniProtKB"/>
</dbReference>
<dbReference type="GO" id="GO:0071027">
    <property type="term" value="P:nuclear RNA surveillance"/>
    <property type="evidence" value="ECO:0000314"/>
    <property type="project" value="UniProtKB"/>
</dbReference>
<dbReference type="Gene3D" id="4.10.1000.10">
    <property type="entry name" value="Zinc finger, CCCH-type"/>
    <property type="match status" value="1"/>
</dbReference>
<dbReference type="InterPro" id="IPR045124">
    <property type="entry name" value="Su(sable)-like"/>
</dbReference>
<dbReference type="InterPro" id="IPR000571">
    <property type="entry name" value="Znf_CCCH"/>
</dbReference>
<dbReference type="InterPro" id="IPR036855">
    <property type="entry name" value="Znf_CCCH_sf"/>
</dbReference>
<dbReference type="PANTHER" id="PTHR13119:SF12">
    <property type="entry name" value="PROTEIN SUPPRESSOR OF SABLE"/>
    <property type="match status" value="1"/>
</dbReference>
<dbReference type="PANTHER" id="PTHR13119">
    <property type="entry name" value="ZINC FINGER CCCH DOMAIN-CONTAINING PROTEI"/>
    <property type="match status" value="1"/>
</dbReference>
<dbReference type="SUPFAM" id="SSF90229">
    <property type="entry name" value="CCCH zinc finger"/>
    <property type="match status" value="2"/>
</dbReference>
<dbReference type="PROSITE" id="PS50103">
    <property type="entry name" value="ZF_C3H1"/>
    <property type="match status" value="2"/>
</dbReference>
<sequence>MSVALADEPLIDLEEDLEDGEIDDDEEDEQQSSKIQVQKKTFVGDDDVQFVGVEAKNQNDDEDVVYVGPSTDAVCLQNSNSTKSKKPRPLEDDHASSIELAIANALKKKGIEPPMPRMRSSNQDTSDQSLEGSGEGLATANPLLQSTRSSRRRKRKKEREREQKKDKEQQNRSRRDENDVSVVPGGVEDMDEYEMMNVRGGSPPPGGAAPPLSSCGQRFSGADWDMDDGSAATGAAGLGAGGGGGYNSHSSYDSYSDEETNGPGLMNQRRRTRRDNEKEHQRGVNNRKRRDRDRLEGGLAGSGSKRNRRDSGEGGGGGQEKMGGSNRVEPRKLELCKFYLMDCCAKRDKCSYMHKEFPCKYYYLGMDCYAGDDCLFYHGEPLSEQLRNVLLKHMETAPKEILGDFKRISRDIAIVQMTRRHEQLCDQLNRENTWNSIGCGLMGKRQDHQMQQQQQQLQHQQLQQQQEQQQTQQQAAADGGGCIPSLLDMVINPPLSENKRKSRWTEKMGAKAAAGAAGSSERDSTSPDAKPLPPHLDLANLSHVLSAENMAKLNKLGITNLEQMLQVPFGQLTEAGLTLVEIGEIQRKAEDAKPQTQAELESSTPPSKRETEANNSNSKSNGLIMVDYTQYLKDAHVSFSGNDPLDDDRDDDEQLIIDDGNDSTAEEDQQPKKAKAPPAATHESSTEEAPLPSVFDLPSFMNNMLGQGSSARQLLPASATSPNQENAHLPGGDQSTHKSAPIGGGTSTNVLGRILFGDKQSDPEARAAFYRDIIRNPFKAHSGDGDVDSSNENSNSNSHSLTPTPTPEPGSQSPKPEDHDQDMPELPVIAPALPPTTPSLYVRRSMYDFDPVKEQEHGRQELLTEEKEQYQRDTDMRLPFEPMKHYMPATEIDAAIFSHTPIRWQLHEVTIEESSYAQIRASALHKEQRELRDPRMRRILGLPETPDNSGPLGSVPIMGPSSFSVDNIARCATTIASPDLETAVRDSTPSSPPPSVVNLPSMSVPPPSMRVPPPNIQVEKPTVRTDPRRDPRRAVLQAPTKGASTANTTAPNASGGSKQISEIRSLLQVSNWYNNLGTNNKIMVNQQLALVFTELKKFHQLPNDAPKIFDVSFIVNNTTLQQIFAKLFIFVDDNGEVVQIPEEPNGNGAALGGGGDSGGGVGGGGGGGGVVLPNLSQPPPNLSQMLRLPPPNIRMLRMSGMMMQMGNVGPPFNQPPPRGGLMGMPPNGNGLNQGVGNLGGLGQLGINQGGGPVPNGNPFNPFGGNNGGGAGVMNNMNSMGNMGMGFNNFNNNGGRGGHFPGGGSGGNGNGNNRNQRGGNHRNRNI</sequence>
<organism>
    <name type="scientific">Drosophila melanogaster</name>
    <name type="common">Fruit fly</name>
    <dbReference type="NCBI Taxonomy" id="7227"/>
    <lineage>
        <taxon>Eukaryota</taxon>
        <taxon>Metazoa</taxon>
        <taxon>Ecdysozoa</taxon>
        <taxon>Arthropoda</taxon>
        <taxon>Hexapoda</taxon>
        <taxon>Insecta</taxon>
        <taxon>Pterygota</taxon>
        <taxon>Neoptera</taxon>
        <taxon>Endopterygota</taxon>
        <taxon>Diptera</taxon>
        <taxon>Brachycera</taxon>
        <taxon>Muscomorpha</taxon>
        <taxon>Ephydroidea</taxon>
        <taxon>Drosophilidae</taxon>
        <taxon>Drosophila</taxon>
        <taxon>Sophophora</taxon>
    </lineage>
</organism>